<dbReference type="EMBL" id="CP000557">
    <property type="protein sequence ID" value="ABO65509.1"/>
    <property type="molecule type" value="Genomic_DNA"/>
</dbReference>
<dbReference type="RefSeq" id="WP_008881928.1">
    <property type="nucleotide sequence ID" value="NC_009328.1"/>
</dbReference>
<dbReference type="SMR" id="A4IJK5"/>
<dbReference type="GeneID" id="87622309"/>
<dbReference type="KEGG" id="gtn:GTNG_0122"/>
<dbReference type="eggNOG" id="COG0098">
    <property type="taxonomic scope" value="Bacteria"/>
</dbReference>
<dbReference type="HOGENOM" id="CLU_065898_2_2_9"/>
<dbReference type="Proteomes" id="UP000001578">
    <property type="component" value="Chromosome"/>
</dbReference>
<dbReference type="GO" id="GO:0015935">
    <property type="term" value="C:small ribosomal subunit"/>
    <property type="evidence" value="ECO:0007669"/>
    <property type="project" value="InterPro"/>
</dbReference>
<dbReference type="GO" id="GO:0019843">
    <property type="term" value="F:rRNA binding"/>
    <property type="evidence" value="ECO:0007669"/>
    <property type="project" value="UniProtKB-UniRule"/>
</dbReference>
<dbReference type="GO" id="GO:0003735">
    <property type="term" value="F:structural constituent of ribosome"/>
    <property type="evidence" value="ECO:0007669"/>
    <property type="project" value="InterPro"/>
</dbReference>
<dbReference type="GO" id="GO:0006412">
    <property type="term" value="P:translation"/>
    <property type="evidence" value="ECO:0007669"/>
    <property type="project" value="UniProtKB-UniRule"/>
</dbReference>
<dbReference type="FunFam" id="3.30.160.20:FF:000001">
    <property type="entry name" value="30S ribosomal protein S5"/>
    <property type="match status" value="1"/>
</dbReference>
<dbReference type="FunFam" id="3.30.230.10:FF:000002">
    <property type="entry name" value="30S ribosomal protein S5"/>
    <property type="match status" value="1"/>
</dbReference>
<dbReference type="Gene3D" id="3.30.160.20">
    <property type="match status" value="1"/>
</dbReference>
<dbReference type="Gene3D" id="3.30.230.10">
    <property type="match status" value="1"/>
</dbReference>
<dbReference type="HAMAP" id="MF_01307_B">
    <property type="entry name" value="Ribosomal_uS5_B"/>
    <property type="match status" value="1"/>
</dbReference>
<dbReference type="InterPro" id="IPR020568">
    <property type="entry name" value="Ribosomal_Su5_D2-typ_SF"/>
</dbReference>
<dbReference type="InterPro" id="IPR000851">
    <property type="entry name" value="Ribosomal_uS5"/>
</dbReference>
<dbReference type="InterPro" id="IPR005712">
    <property type="entry name" value="Ribosomal_uS5_bac-type"/>
</dbReference>
<dbReference type="InterPro" id="IPR005324">
    <property type="entry name" value="Ribosomal_uS5_C"/>
</dbReference>
<dbReference type="InterPro" id="IPR013810">
    <property type="entry name" value="Ribosomal_uS5_N"/>
</dbReference>
<dbReference type="InterPro" id="IPR018192">
    <property type="entry name" value="Ribosomal_uS5_N_CS"/>
</dbReference>
<dbReference type="InterPro" id="IPR014721">
    <property type="entry name" value="Ribsml_uS5_D2-typ_fold_subgr"/>
</dbReference>
<dbReference type="NCBIfam" id="TIGR01021">
    <property type="entry name" value="rpsE_bact"/>
    <property type="match status" value="1"/>
</dbReference>
<dbReference type="PANTHER" id="PTHR48277">
    <property type="entry name" value="MITOCHONDRIAL RIBOSOMAL PROTEIN S5"/>
    <property type="match status" value="1"/>
</dbReference>
<dbReference type="PANTHER" id="PTHR48277:SF1">
    <property type="entry name" value="MITOCHONDRIAL RIBOSOMAL PROTEIN S5"/>
    <property type="match status" value="1"/>
</dbReference>
<dbReference type="Pfam" id="PF00333">
    <property type="entry name" value="Ribosomal_S5"/>
    <property type="match status" value="1"/>
</dbReference>
<dbReference type="Pfam" id="PF03719">
    <property type="entry name" value="Ribosomal_S5_C"/>
    <property type="match status" value="1"/>
</dbReference>
<dbReference type="SUPFAM" id="SSF54768">
    <property type="entry name" value="dsRNA-binding domain-like"/>
    <property type="match status" value="1"/>
</dbReference>
<dbReference type="SUPFAM" id="SSF54211">
    <property type="entry name" value="Ribosomal protein S5 domain 2-like"/>
    <property type="match status" value="1"/>
</dbReference>
<dbReference type="PROSITE" id="PS00585">
    <property type="entry name" value="RIBOSOMAL_S5"/>
    <property type="match status" value="1"/>
</dbReference>
<dbReference type="PROSITE" id="PS50881">
    <property type="entry name" value="S5_DSRBD"/>
    <property type="match status" value="1"/>
</dbReference>
<name>RS5_GEOTN</name>
<organism>
    <name type="scientific">Geobacillus thermodenitrificans (strain NG80-2)</name>
    <dbReference type="NCBI Taxonomy" id="420246"/>
    <lineage>
        <taxon>Bacteria</taxon>
        <taxon>Bacillati</taxon>
        <taxon>Bacillota</taxon>
        <taxon>Bacilli</taxon>
        <taxon>Bacillales</taxon>
        <taxon>Anoxybacillaceae</taxon>
        <taxon>Geobacillus</taxon>
    </lineage>
</organism>
<sequence length="166" mass="17661">MRRIDPNKLELEERVVAINRVAKVVKGGRRLRFSALVVVGDKNGHVGFGTGKAQEVPEAIRKAIEDAKKNLMEVPIVGTTIPHEVIGHFGAGEIILKPASEGTGVIAGGPARAVLELAGISDILSKSIGSNTPINMVRATFDGLKQLKRAEDVAKLRGKTVEELLG</sequence>
<feature type="chain" id="PRO_1000086013" description="Small ribosomal subunit protein uS5">
    <location>
        <begin position="1"/>
        <end position="166"/>
    </location>
</feature>
<feature type="domain" description="S5 DRBM" evidence="1">
    <location>
        <begin position="11"/>
        <end position="74"/>
    </location>
</feature>
<reference key="1">
    <citation type="journal article" date="2007" name="Proc. Natl. Acad. Sci. U.S.A.">
        <title>Genome and proteome of long-chain alkane degrading Geobacillus thermodenitrificans NG80-2 isolated from a deep-subsurface oil reservoir.</title>
        <authorList>
            <person name="Feng L."/>
            <person name="Wang W."/>
            <person name="Cheng J."/>
            <person name="Ren Y."/>
            <person name="Zhao G."/>
            <person name="Gao C."/>
            <person name="Tang Y."/>
            <person name="Liu X."/>
            <person name="Han W."/>
            <person name="Peng X."/>
            <person name="Liu R."/>
            <person name="Wang L."/>
        </authorList>
    </citation>
    <scope>NUCLEOTIDE SEQUENCE [LARGE SCALE GENOMIC DNA]</scope>
    <source>
        <strain>NG80-2</strain>
    </source>
</reference>
<accession>A4IJK5</accession>
<comment type="function">
    <text evidence="1">With S4 and S12 plays an important role in translational accuracy.</text>
</comment>
<comment type="function">
    <text evidence="1">Located at the back of the 30S subunit body where it stabilizes the conformation of the head with respect to the body.</text>
</comment>
<comment type="subunit">
    <text evidence="1">Part of the 30S ribosomal subunit. Contacts proteins S4 and S8.</text>
</comment>
<comment type="domain">
    <text>The N-terminal domain interacts with the head of the 30S subunit; the C-terminal domain interacts with the body and contacts protein S4. The interaction surface between S4 and S5 is involved in control of translational fidelity.</text>
</comment>
<comment type="similarity">
    <text evidence="1">Belongs to the universal ribosomal protein uS5 family.</text>
</comment>
<evidence type="ECO:0000255" key="1">
    <source>
        <dbReference type="HAMAP-Rule" id="MF_01307"/>
    </source>
</evidence>
<evidence type="ECO:0000305" key="2"/>
<protein>
    <recommendedName>
        <fullName evidence="1">Small ribosomal subunit protein uS5</fullName>
    </recommendedName>
    <alternativeName>
        <fullName evidence="2">30S ribosomal protein S5</fullName>
    </alternativeName>
</protein>
<keyword id="KW-0687">Ribonucleoprotein</keyword>
<keyword id="KW-0689">Ribosomal protein</keyword>
<keyword id="KW-0694">RNA-binding</keyword>
<keyword id="KW-0699">rRNA-binding</keyword>
<proteinExistence type="inferred from homology"/>
<gene>
    <name evidence="1" type="primary">rpsE</name>
    <name type="ordered locus">GTNG_0122</name>
</gene>